<organism>
    <name type="scientific">Yersinia pestis (strain Pestoides F)</name>
    <dbReference type="NCBI Taxonomy" id="386656"/>
    <lineage>
        <taxon>Bacteria</taxon>
        <taxon>Pseudomonadati</taxon>
        <taxon>Pseudomonadota</taxon>
        <taxon>Gammaproteobacteria</taxon>
        <taxon>Enterobacterales</taxon>
        <taxon>Yersiniaceae</taxon>
        <taxon>Yersinia</taxon>
    </lineage>
</organism>
<comment type="function">
    <text evidence="1">Forms an efflux pump with AaeA. Could function as a metabolic relief valve, allowing to eliminate certain compounds when they accumulate to high levels in the cell.</text>
</comment>
<comment type="subcellular location">
    <subcellularLocation>
        <location evidence="1">Cell inner membrane</location>
        <topology evidence="1">Multi-pass membrane protein</topology>
    </subcellularLocation>
</comment>
<comment type="similarity">
    <text evidence="1">Belongs to the aromatic acid exporter ArAE (TC 2.A.85) family.</text>
</comment>
<protein>
    <recommendedName>
        <fullName evidence="1">p-hydroxybenzoic acid efflux pump subunit AaeB</fullName>
        <shortName evidence="1">pHBA efflux pump protein B</shortName>
    </recommendedName>
</protein>
<name>AAEB_YERPP</name>
<feature type="chain" id="PRO_0000300572" description="p-hydroxybenzoic acid efflux pump subunit AaeB">
    <location>
        <begin position="1"/>
        <end position="651"/>
    </location>
</feature>
<feature type="transmembrane region" description="Helical" evidence="1">
    <location>
        <begin position="11"/>
        <end position="31"/>
    </location>
</feature>
<feature type="transmembrane region" description="Helical" evidence="1">
    <location>
        <begin position="41"/>
        <end position="61"/>
    </location>
</feature>
<feature type="transmembrane region" description="Helical" evidence="1">
    <location>
        <begin position="67"/>
        <end position="87"/>
    </location>
</feature>
<feature type="transmembrane region" description="Helical" evidence="1">
    <location>
        <begin position="91"/>
        <end position="111"/>
    </location>
</feature>
<feature type="transmembrane region" description="Helical" evidence="1">
    <location>
        <begin position="119"/>
        <end position="139"/>
    </location>
</feature>
<feature type="transmembrane region" description="Helical" evidence="1">
    <location>
        <begin position="150"/>
        <end position="170"/>
    </location>
</feature>
<feature type="transmembrane region" description="Helical" evidence="1">
    <location>
        <begin position="368"/>
        <end position="388"/>
    </location>
</feature>
<feature type="transmembrane region" description="Helical" evidence="1">
    <location>
        <begin position="405"/>
        <end position="425"/>
    </location>
</feature>
<feature type="transmembrane region" description="Helical" evidence="1">
    <location>
        <begin position="429"/>
        <end position="449"/>
    </location>
</feature>
<feature type="transmembrane region" description="Helical" evidence="1">
    <location>
        <begin position="455"/>
        <end position="475"/>
    </location>
</feature>
<feature type="transmembrane region" description="Helical" evidence="1">
    <location>
        <begin position="481"/>
        <end position="501"/>
    </location>
</feature>
<accession>A4THF0</accession>
<proteinExistence type="inferred from homology"/>
<keyword id="KW-0997">Cell inner membrane</keyword>
<keyword id="KW-1003">Cell membrane</keyword>
<keyword id="KW-0472">Membrane</keyword>
<keyword id="KW-0812">Transmembrane</keyword>
<keyword id="KW-1133">Transmembrane helix</keyword>
<keyword id="KW-0813">Transport</keyword>
<evidence type="ECO:0000255" key="1">
    <source>
        <dbReference type="HAMAP-Rule" id="MF_01545"/>
    </source>
</evidence>
<gene>
    <name evidence="1" type="primary">aaeB</name>
    <name type="ordered locus">YPDSF_0293</name>
</gene>
<sequence>MTHPSFIRLRFAFKLSFAIVAALFLGFHLQLETPRWSVLTAAIVSAGPAFAAGGEPFSGAIRHRGWLRIIGTFIGCIGGLVIIVLTIRAPVLTLMLCCLWAGICTWISSLVRVENSYAFGLAGYTALIIIVTTGETPLLTPQFAVERCSEIVLGIVCAVMADLLFSPRSIKQDIDRLVDKVLVDQYRLLQLCIQPAEKSEIDRAWNELVKNTTSLNGMRSYLMMESSRWQRCNRRLQVLHTESLALITQACETYLVMSNHPEVISAELKTMLSEPAQTPAEIHQQMKKLRQFIAASHSEAIPHTISSWVGAATRYLLLSKGIQTNSSINQVEEDILAGDAPVKPISAEGHHAMINGLRTGIATAIGGLFWLWTGWTSGAGCMVMIAVVTSLAMRTPNPRRMALDFLVGVIIALPIGALYFMFIIPSTQQSMLLLCISLGVLAFIIGIEVQKRRLGSLGTLASTINIIVLSNPMIFNVRQFLDSALGQIVGCFVSLIVLLLIRDNAKDRTGRTLLNRFVYSAVSALTTNKTKRGENHLPALYQQLNQLLMMFPADIDKYRLALTLIIAHQRLNRTEIPVNAELSAFHKQIRSTAERVITVNNDQKRRYYFARLLQELDQYQQKLVDYQAADAVIRPVKRLTEMLRKYQSALI</sequence>
<dbReference type="EMBL" id="CP000668">
    <property type="protein sequence ID" value="ABP38712.1"/>
    <property type="molecule type" value="Genomic_DNA"/>
</dbReference>
<dbReference type="RefSeq" id="WP_002210095.1">
    <property type="nucleotide sequence ID" value="NZ_CP009715.1"/>
</dbReference>
<dbReference type="SMR" id="A4THF0"/>
<dbReference type="GeneID" id="57975111"/>
<dbReference type="KEGG" id="ypp:YPDSF_0293"/>
<dbReference type="PATRIC" id="fig|386656.14.peg.1592"/>
<dbReference type="GO" id="GO:0005886">
    <property type="term" value="C:plasma membrane"/>
    <property type="evidence" value="ECO:0007669"/>
    <property type="project" value="UniProtKB-SubCell"/>
</dbReference>
<dbReference type="GO" id="GO:0022857">
    <property type="term" value="F:transmembrane transporter activity"/>
    <property type="evidence" value="ECO:0007669"/>
    <property type="project" value="UniProtKB-UniRule"/>
</dbReference>
<dbReference type="GO" id="GO:0046942">
    <property type="term" value="P:carboxylic acid transport"/>
    <property type="evidence" value="ECO:0007669"/>
    <property type="project" value="InterPro"/>
</dbReference>
<dbReference type="HAMAP" id="MF_01545">
    <property type="entry name" value="AaeB"/>
    <property type="match status" value="1"/>
</dbReference>
<dbReference type="InterPro" id="IPR006726">
    <property type="entry name" value="PHBA_efflux_AaeB/fusaric-R"/>
</dbReference>
<dbReference type="InterPro" id="IPR023706">
    <property type="entry name" value="PHBA_efflux_pump_AaeB"/>
</dbReference>
<dbReference type="NCBIfam" id="NF007916">
    <property type="entry name" value="PRK10631.1"/>
    <property type="match status" value="1"/>
</dbReference>
<dbReference type="PANTHER" id="PTHR30509:SF9">
    <property type="entry name" value="MULTIDRUG RESISTANCE PROTEIN MDTO"/>
    <property type="match status" value="1"/>
</dbReference>
<dbReference type="PANTHER" id="PTHR30509">
    <property type="entry name" value="P-HYDROXYBENZOIC ACID EFFLUX PUMP SUBUNIT-RELATED"/>
    <property type="match status" value="1"/>
</dbReference>
<dbReference type="Pfam" id="PF04632">
    <property type="entry name" value="FUSC"/>
    <property type="match status" value="1"/>
</dbReference>
<reference key="1">
    <citation type="submission" date="2007-02" db="EMBL/GenBank/DDBJ databases">
        <title>Complete sequence of chromosome of Yersinia pestis Pestoides F.</title>
        <authorList>
            <consortium name="US DOE Joint Genome Institute"/>
            <person name="Copeland A."/>
            <person name="Lucas S."/>
            <person name="Lapidus A."/>
            <person name="Barry K."/>
            <person name="Detter J.C."/>
            <person name="Glavina del Rio T."/>
            <person name="Hammon N."/>
            <person name="Israni S."/>
            <person name="Dalin E."/>
            <person name="Tice H."/>
            <person name="Pitluck S."/>
            <person name="Di Bartolo G."/>
            <person name="Chain P."/>
            <person name="Malfatti S."/>
            <person name="Shin M."/>
            <person name="Vergez L."/>
            <person name="Schmutz J."/>
            <person name="Larimer F."/>
            <person name="Land M."/>
            <person name="Hauser L."/>
            <person name="Worsham P."/>
            <person name="Chu M."/>
            <person name="Bearden S."/>
            <person name="Garcia E."/>
            <person name="Richardson P."/>
        </authorList>
    </citation>
    <scope>NUCLEOTIDE SEQUENCE [LARGE SCALE GENOMIC DNA]</scope>
    <source>
        <strain>Pestoides F</strain>
    </source>
</reference>